<keyword id="KW-0472">Membrane</keyword>
<keyword id="KW-0812">Transmembrane</keyword>
<keyword id="KW-1133">Transmembrane helix</keyword>
<reference key="1">
    <citation type="journal article" date="1997" name="Nature">
        <title>The nucleotide sequence of Saccharomyces cerevisiae chromosome XIII.</title>
        <authorList>
            <person name="Bowman S."/>
            <person name="Churcher C.M."/>
            <person name="Badcock K."/>
            <person name="Brown D."/>
            <person name="Chillingworth T."/>
            <person name="Connor R."/>
            <person name="Dedman K."/>
            <person name="Devlin K."/>
            <person name="Gentles S."/>
            <person name="Hamlin N."/>
            <person name="Hunt S."/>
            <person name="Jagels K."/>
            <person name="Lye G."/>
            <person name="Moule S."/>
            <person name="Odell C."/>
            <person name="Pearson D."/>
            <person name="Rajandream M.A."/>
            <person name="Rice P."/>
            <person name="Skelton J."/>
            <person name="Walsh S.V."/>
            <person name="Whitehead S."/>
            <person name="Barrell B.G."/>
        </authorList>
    </citation>
    <scope>NUCLEOTIDE SEQUENCE [LARGE SCALE GENOMIC DNA]</scope>
    <source>
        <strain>ATCC 204508 / S288c</strain>
    </source>
</reference>
<reference key="2">
    <citation type="journal article" date="2014" name="G3 (Bethesda)">
        <title>The reference genome sequence of Saccharomyces cerevisiae: Then and now.</title>
        <authorList>
            <person name="Engel S.R."/>
            <person name="Dietrich F.S."/>
            <person name="Fisk D.G."/>
            <person name="Binkley G."/>
            <person name="Balakrishnan R."/>
            <person name="Costanzo M.C."/>
            <person name="Dwight S.S."/>
            <person name="Hitz B.C."/>
            <person name="Karra K."/>
            <person name="Nash R.S."/>
            <person name="Weng S."/>
            <person name="Wong E.D."/>
            <person name="Lloyd P."/>
            <person name="Skrzypek M.S."/>
            <person name="Miyasato S.R."/>
            <person name="Simison M."/>
            <person name="Cherry J.M."/>
        </authorList>
    </citation>
    <scope>GENOME REANNOTATION</scope>
    <source>
        <strain>ATCC 204508 / S288c</strain>
    </source>
</reference>
<reference key="3">
    <citation type="journal article" date="2007" name="Genome Res.">
        <title>Approaching a complete repository of sequence-verified protein-encoding clones for Saccharomyces cerevisiae.</title>
        <authorList>
            <person name="Hu Y."/>
            <person name="Rolfs A."/>
            <person name="Bhullar B."/>
            <person name="Murthy T.V.S."/>
            <person name="Zhu C."/>
            <person name="Berger M.F."/>
            <person name="Camargo A.A."/>
            <person name="Kelley F."/>
            <person name="McCarron S."/>
            <person name="Jepson D."/>
            <person name="Richardson A."/>
            <person name="Raphael J."/>
            <person name="Moreira D."/>
            <person name="Taycher E."/>
            <person name="Zuo D."/>
            <person name="Mohr S."/>
            <person name="Kane M.F."/>
            <person name="Williamson J."/>
            <person name="Simpson A.J.G."/>
            <person name="Bulyk M.L."/>
            <person name="Harlow E."/>
            <person name="Marsischky G."/>
            <person name="Kolodner R.D."/>
            <person name="LaBaer J."/>
        </authorList>
    </citation>
    <scope>NUCLEOTIDE SEQUENCE [GENOMIC DNA]</scope>
    <source>
        <strain>ATCC 204508 / S288c</strain>
    </source>
</reference>
<proteinExistence type="uncertain"/>
<dbReference type="EMBL" id="Z46660">
    <property type="protein sequence ID" value="CAA86648.1"/>
    <property type="molecule type" value="Genomic_DNA"/>
</dbReference>
<dbReference type="EMBL" id="AY693291">
    <property type="protein sequence ID" value="AAT93310.1"/>
    <property type="molecule type" value="Genomic_DNA"/>
</dbReference>
<dbReference type="PIR" id="S49637">
    <property type="entry name" value="S49637"/>
</dbReference>
<dbReference type="STRING" id="4932.YML090W"/>
<dbReference type="PaxDb" id="4932-YML090W"/>
<dbReference type="EnsemblFungi" id="YML090W_mRNA">
    <property type="protein sequence ID" value="YML090W"/>
    <property type="gene ID" value="YML090W"/>
</dbReference>
<dbReference type="AGR" id="SGD:S000004555"/>
<dbReference type="SGD" id="S000004555">
    <property type="gene designation" value="YML090W"/>
</dbReference>
<dbReference type="HOGENOM" id="CLU_1961317_0_0_1"/>
<dbReference type="GO" id="GO:0016020">
    <property type="term" value="C:membrane"/>
    <property type="evidence" value="ECO:0007669"/>
    <property type="project" value="UniProtKB-SubCell"/>
</dbReference>
<protein>
    <recommendedName>
        <fullName>Putative uncharacterized protein YML090W</fullName>
    </recommendedName>
</protein>
<evidence type="ECO:0000255" key="1"/>
<evidence type="ECO:0000305" key="2"/>
<evidence type="ECO:0000305" key="3">
    <source>
    </source>
</evidence>
<gene>
    <name type="ordered locus">YML090W</name>
</gene>
<name>YMJ0_YEAST</name>
<sequence length="128" mass="15034">MLVFSFLFVVVSINLNALIFLCKKSWASYLFLYLYNFFFCEDEYKLTKNCVRVEAIAPFMMCLGSLGAILGKQRTANFLLLSYNVINNPVVLVYYVENFSRINFIKHTTKEKSVIWTNERQLNPWICN</sequence>
<comment type="subcellular location">
    <subcellularLocation>
        <location evidence="2">Membrane</location>
        <topology evidence="2">Multi-pass membrane protein</topology>
    </subcellularLocation>
</comment>
<comment type="miscellaneous">
    <text evidence="2">Partially overlaps YML089C.</text>
</comment>
<comment type="caution">
    <text evidence="3">Product of a dubious gene prediction unlikely to encode a functional protein. Because of that it is not part of the S.cerevisiae S288c complete/reference proteome set.</text>
</comment>
<accession>Q04501</accession>
<feature type="chain" id="PRO_0000203245" description="Putative uncharacterized protein YML090W">
    <location>
        <begin position="1"/>
        <end position="128"/>
    </location>
</feature>
<feature type="transmembrane region" description="Helical" evidence="1">
    <location>
        <begin position="1"/>
        <end position="21"/>
    </location>
</feature>
<feature type="transmembrane region" description="Helical" evidence="1">
    <location>
        <begin position="51"/>
        <end position="71"/>
    </location>
</feature>
<feature type="transmembrane region" description="Helical" evidence="1">
    <location>
        <begin position="76"/>
        <end position="96"/>
    </location>
</feature>
<organism>
    <name type="scientific">Saccharomyces cerevisiae (strain ATCC 204508 / S288c)</name>
    <name type="common">Baker's yeast</name>
    <dbReference type="NCBI Taxonomy" id="559292"/>
    <lineage>
        <taxon>Eukaryota</taxon>
        <taxon>Fungi</taxon>
        <taxon>Dikarya</taxon>
        <taxon>Ascomycota</taxon>
        <taxon>Saccharomycotina</taxon>
        <taxon>Saccharomycetes</taxon>
        <taxon>Saccharomycetales</taxon>
        <taxon>Saccharomycetaceae</taxon>
        <taxon>Saccharomyces</taxon>
    </lineage>
</organism>